<reference key="1">
    <citation type="journal article" date="2005" name="PLoS Genet.">
        <title>Life in hot carbon monoxide: the complete genome sequence of Carboxydothermus hydrogenoformans Z-2901.</title>
        <authorList>
            <person name="Wu M."/>
            <person name="Ren Q."/>
            <person name="Durkin A.S."/>
            <person name="Daugherty S.C."/>
            <person name="Brinkac L.M."/>
            <person name="Dodson R.J."/>
            <person name="Madupu R."/>
            <person name="Sullivan S.A."/>
            <person name="Kolonay J.F."/>
            <person name="Nelson W.C."/>
            <person name="Tallon L.J."/>
            <person name="Jones K.M."/>
            <person name="Ulrich L.E."/>
            <person name="Gonzalez J.M."/>
            <person name="Zhulin I.B."/>
            <person name="Robb F.T."/>
            <person name="Eisen J.A."/>
        </authorList>
    </citation>
    <scope>NUCLEOTIDE SEQUENCE [LARGE SCALE GENOMIC DNA]</scope>
    <source>
        <strain>ATCC BAA-161 / DSM 6008 / Z-2901</strain>
    </source>
</reference>
<gene>
    <name evidence="1" type="primary">frr</name>
    <name type="ordered locus">CHY_1784</name>
</gene>
<name>RRF_CARHZ</name>
<organism>
    <name type="scientific">Carboxydothermus hydrogenoformans (strain ATCC BAA-161 / DSM 6008 / Z-2901)</name>
    <dbReference type="NCBI Taxonomy" id="246194"/>
    <lineage>
        <taxon>Bacteria</taxon>
        <taxon>Bacillati</taxon>
        <taxon>Bacillota</taxon>
        <taxon>Clostridia</taxon>
        <taxon>Thermoanaerobacterales</taxon>
        <taxon>Thermoanaerobacteraceae</taxon>
        <taxon>Carboxydothermus</taxon>
    </lineage>
</organism>
<protein>
    <recommendedName>
        <fullName evidence="1">Ribosome-recycling factor</fullName>
        <shortName evidence="1">RRF</shortName>
    </recommendedName>
    <alternativeName>
        <fullName evidence="1">Ribosome-releasing factor</fullName>
    </alternativeName>
</protein>
<dbReference type="EMBL" id="CP000141">
    <property type="protein sequence ID" value="ABB16154.1"/>
    <property type="molecule type" value="Genomic_DNA"/>
</dbReference>
<dbReference type="SMR" id="Q3AB80"/>
<dbReference type="FunCoup" id="Q3AB80">
    <property type="interactions" value="482"/>
</dbReference>
<dbReference type="STRING" id="246194.CHY_1784"/>
<dbReference type="KEGG" id="chy:CHY_1784"/>
<dbReference type="eggNOG" id="COG0233">
    <property type="taxonomic scope" value="Bacteria"/>
</dbReference>
<dbReference type="HOGENOM" id="CLU_073981_2_0_9"/>
<dbReference type="InParanoid" id="Q3AB80"/>
<dbReference type="OrthoDB" id="9804006at2"/>
<dbReference type="Proteomes" id="UP000002706">
    <property type="component" value="Chromosome"/>
</dbReference>
<dbReference type="GO" id="GO:0005737">
    <property type="term" value="C:cytoplasm"/>
    <property type="evidence" value="ECO:0007669"/>
    <property type="project" value="UniProtKB-SubCell"/>
</dbReference>
<dbReference type="GO" id="GO:0043023">
    <property type="term" value="F:ribosomal large subunit binding"/>
    <property type="evidence" value="ECO:0007669"/>
    <property type="project" value="TreeGrafter"/>
</dbReference>
<dbReference type="GO" id="GO:0006415">
    <property type="term" value="P:translational termination"/>
    <property type="evidence" value="ECO:0007669"/>
    <property type="project" value="UniProtKB-UniRule"/>
</dbReference>
<dbReference type="CDD" id="cd00520">
    <property type="entry name" value="RRF"/>
    <property type="match status" value="1"/>
</dbReference>
<dbReference type="FunFam" id="1.10.132.20:FF:000001">
    <property type="entry name" value="Ribosome-recycling factor"/>
    <property type="match status" value="1"/>
</dbReference>
<dbReference type="FunFam" id="3.30.1360.40:FF:000001">
    <property type="entry name" value="Ribosome-recycling factor"/>
    <property type="match status" value="1"/>
</dbReference>
<dbReference type="Gene3D" id="3.30.1360.40">
    <property type="match status" value="1"/>
</dbReference>
<dbReference type="Gene3D" id="1.10.132.20">
    <property type="entry name" value="Ribosome-recycling factor"/>
    <property type="match status" value="1"/>
</dbReference>
<dbReference type="HAMAP" id="MF_00040">
    <property type="entry name" value="RRF"/>
    <property type="match status" value="1"/>
</dbReference>
<dbReference type="InterPro" id="IPR002661">
    <property type="entry name" value="Ribosome_recyc_fac"/>
</dbReference>
<dbReference type="InterPro" id="IPR023584">
    <property type="entry name" value="Ribosome_recyc_fac_dom"/>
</dbReference>
<dbReference type="InterPro" id="IPR036191">
    <property type="entry name" value="RRF_sf"/>
</dbReference>
<dbReference type="NCBIfam" id="TIGR00496">
    <property type="entry name" value="frr"/>
    <property type="match status" value="1"/>
</dbReference>
<dbReference type="PANTHER" id="PTHR20982:SF3">
    <property type="entry name" value="MITOCHONDRIAL RIBOSOME RECYCLING FACTOR PSEUDO 1"/>
    <property type="match status" value="1"/>
</dbReference>
<dbReference type="PANTHER" id="PTHR20982">
    <property type="entry name" value="RIBOSOME RECYCLING FACTOR"/>
    <property type="match status" value="1"/>
</dbReference>
<dbReference type="Pfam" id="PF01765">
    <property type="entry name" value="RRF"/>
    <property type="match status" value="1"/>
</dbReference>
<dbReference type="SUPFAM" id="SSF55194">
    <property type="entry name" value="Ribosome recycling factor, RRF"/>
    <property type="match status" value="1"/>
</dbReference>
<accession>Q3AB80</accession>
<proteinExistence type="inferred from homology"/>
<feature type="chain" id="PRO_1000003134" description="Ribosome-recycling factor">
    <location>
        <begin position="1"/>
        <end position="185"/>
    </location>
</feature>
<keyword id="KW-0963">Cytoplasm</keyword>
<keyword id="KW-0648">Protein biosynthesis</keyword>
<keyword id="KW-1185">Reference proteome</keyword>
<comment type="function">
    <text evidence="1">Responsible for the release of ribosomes from messenger RNA at the termination of protein biosynthesis. May increase the efficiency of translation by recycling ribosomes from one round of translation to another.</text>
</comment>
<comment type="subcellular location">
    <subcellularLocation>
        <location evidence="1">Cytoplasm</location>
    </subcellularLocation>
</comment>
<comment type="similarity">
    <text evidence="1">Belongs to the RRF family.</text>
</comment>
<evidence type="ECO:0000255" key="1">
    <source>
        <dbReference type="HAMAP-Rule" id="MF_00040"/>
    </source>
</evidence>
<sequence>MIQDILKEAQDHMQKAIEVLKKEFATMRVGRATPALLEKVVVEYYGTQMPVNQLATISAPEPRLLVIQPWDKGALGAIEKAILKSDLGITPTNDGSVIRLAIPPLTQERRQELVKVARKKAEEARVAIRNIRRDANDRIKDLEKDKVISEDEGKRGQDEVQKLTDKFIKTVDELLKAKEDEILSI</sequence>